<accession>B8GJL3</accession>
<sequence>MKAVCLLSGGMDSSTLAYVAKDMGYHIHALHLNYGQRTEKKELQSATAIARSLSAEEFIPLDLGYFKAFGKSSLTDPAIDVDVFDENRPELPNTYVPFRNANLLSIATSFAESRDADAIFIGVQALDYSGYPDCRPAFIQAFQQVMDLGTADGTHIDLLTPFIGLTKTDILRKGLDLGVPYEHTWSCYQNEEKACGVCGSCHFRQKAFAELGLSDPIPYEE</sequence>
<dbReference type="EC" id="6.3.4.20" evidence="1"/>
<dbReference type="EMBL" id="CP001338">
    <property type="protein sequence ID" value="ACL15667.1"/>
    <property type="molecule type" value="Genomic_DNA"/>
</dbReference>
<dbReference type="RefSeq" id="WP_012616986.1">
    <property type="nucleotide sequence ID" value="NC_011832.1"/>
</dbReference>
<dbReference type="SMR" id="B8GJL3"/>
<dbReference type="STRING" id="521011.Mpal_0284"/>
<dbReference type="GeneID" id="7272584"/>
<dbReference type="KEGG" id="mpl:Mpal_0284"/>
<dbReference type="eggNOG" id="arCOG00039">
    <property type="taxonomic scope" value="Archaea"/>
</dbReference>
<dbReference type="HOGENOM" id="CLU_081854_1_0_2"/>
<dbReference type="OrthoDB" id="6532at2157"/>
<dbReference type="UniPathway" id="UPA00391"/>
<dbReference type="Proteomes" id="UP000002457">
    <property type="component" value="Chromosome"/>
</dbReference>
<dbReference type="GO" id="GO:0005524">
    <property type="term" value="F:ATP binding"/>
    <property type="evidence" value="ECO:0007669"/>
    <property type="project" value="UniProtKB-UniRule"/>
</dbReference>
<dbReference type="GO" id="GO:0016879">
    <property type="term" value="F:ligase activity, forming carbon-nitrogen bonds"/>
    <property type="evidence" value="ECO:0007669"/>
    <property type="project" value="UniProtKB-UniRule"/>
</dbReference>
<dbReference type="GO" id="GO:0008270">
    <property type="term" value="F:zinc ion binding"/>
    <property type="evidence" value="ECO:0007669"/>
    <property type="project" value="UniProtKB-UniRule"/>
</dbReference>
<dbReference type="CDD" id="cd01995">
    <property type="entry name" value="QueC-like"/>
    <property type="match status" value="1"/>
</dbReference>
<dbReference type="Gene3D" id="3.40.50.620">
    <property type="entry name" value="HUPs"/>
    <property type="match status" value="1"/>
</dbReference>
<dbReference type="HAMAP" id="MF_01633">
    <property type="entry name" value="QueC"/>
    <property type="match status" value="1"/>
</dbReference>
<dbReference type="InterPro" id="IPR018317">
    <property type="entry name" value="QueC"/>
</dbReference>
<dbReference type="InterPro" id="IPR014729">
    <property type="entry name" value="Rossmann-like_a/b/a_fold"/>
</dbReference>
<dbReference type="NCBIfam" id="TIGR00364">
    <property type="entry name" value="7-cyano-7-deazaguanine synthase QueC"/>
    <property type="match status" value="1"/>
</dbReference>
<dbReference type="PANTHER" id="PTHR42914">
    <property type="entry name" value="7-CYANO-7-DEAZAGUANINE SYNTHASE"/>
    <property type="match status" value="1"/>
</dbReference>
<dbReference type="PANTHER" id="PTHR42914:SF1">
    <property type="entry name" value="7-CYANO-7-DEAZAGUANINE SYNTHASE"/>
    <property type="match status" value="1"/>
</dbReference>
<dbReference type="Pfam" id="PF06508">
    <property type="entry name" value="QueC"/>
    <property type="match status" value="1"/>
</dbReference>
<dbReference type="PIRSF" id="PIRSF006293">
    <property type="entry name" value="ExsB"/>
    <property type="match status" value="1"/>
</dbReference>
<dbReference type="SUPFAM" id="SSF52402">
    <property type="entry name" value="Adenine nucleotide alpha hydrolases-like"/>
    <property type="match status" value="1"/>
</dbReference>
<organism>
    <name type="scientific">Methanosphaerula palustris (strain ATCC BAA-1556 / DSM 19958 / E1-9c)</name>
    <dbReference type="NCBI Taxonomy" id="521011"/>
    <lineage>
        <taxon>Archaea</taxon>
        <taxon>Methanobacteriati</taxon>
        <taxon>Methanobacteriota</taxon>
        <taxon>Stenosarchaea group</taxon>
        <taxon>Methanomicrobia</taxon>
        <taxon>Methanomicrobiales</taxon>
        <taxon>Methanoregulaceae</taxon>
        <taxon>Methanosphaerula</taxon>
    </lineage>
</organism>
<gene>
    <name evidence="1" type="primary">queC</name>
    <name type="ordered locus">Mpal_0284</name>
</gene>
<reference key="1">
    <citation type="journal article" date="2015" name="Genome Announc.">
        <title>Complete Genome Sequence of Methanosphaerula palustris E1-9CT, a Hydrogenotrophic Methanogen Isolated from a Minerotrophic Fen Peatland.</title>
        <authorList>
            <person name="Cadillo-Quiroz H."/>
            <person name="Browne P."/>
            <person name="Kyrpides N."/>
            <person name="Woyke T."/>
            <person name="Goodwin L."/>
            <person name="Detter C."/>
            <person name="Yavitt J.B."/>
            <person name="Zinder S.H."/>
        </authorList>
    </citation>
    <scope>NUCLEOTIDE SEQUENCE [LARGE SCALE GENOMIC DNA]</scope>
    <source>
        <strain>ATCC BAA-1556 / DSM 19958 / E1-9c</strain>
    </source>
</reference>
<evidence type="ECO:0000255" key="1">
    <source>
        <dbReference type="HAMAP-Rule" id="MF_01633"/>
    </source>
</evidence>
<name>QUEC_METPE</name>
<comment type="function">
    <text evidence="1">Catalyzes the ATP-dependent conversion of 7-carboxy-7-deazaguanine (CDG) to 7-cyano-7-deazaguanine (preQ(0)).</text>
</comment>
<comment type="catalytic activity">
    <reaction evidence="1">
        <text>7-carboxy-7-deazaguanine + NH4(+) + ATP = 7-cyano-7-deazaguanine + ADP + phosphate + H2O + H(+)</text>
        <dbReference type="Rhea" id="RHEA:27982"/>
        <dbReference type="ChEBI" id="CHEBI:15377"/>
        <dbReference type="ChEBI" id="CHEBI:15378"/>
        <dbReference type="ChEBI" id="CHEBI:28938"/>
        <dbReference type="ChEBI" id="CHEBI:30616"/>
        <dbReference type="ChEBI" id="CHEBI:43474"/>
        <dbReference type="ChEBI" id="CHEBI:45075"/>
        <dbReference type="ChEBI" id="CHEBI:61036"/>
        <dbReference type="ChEBI" id="CHEBI:456216"/>
        <dbReference type="EC" id="6.3.4.20"/>
    </reaction>
</comment>
<comment type="cofactor">
    <cofactor evidence="1">
        <name>Zn(2+)</name>
        <dbReference type="ChEBI" id="CHEBI:29105"/>
    </cofactor>
    <text evidence="1">Binds 1 zinc ion per subunit.</text>
</comment>
<comment type="pathway">
    <text evidence="1">Purine metabolism; 7-cyano-7-deazaguanine biosynthesis.</text>
</comment>
<comment type="similarity">
    <text evidence="1">Belongs to the QueC family.</text>
</comment>
<keyword id="KW-0067">ATP-binding</keyword>
<keyword id="KW-0436">Ligase</keyword>
<keyword id="KW-0479">Metal-binding</keyword>
<keyword id="KW-0547">Nucleotide-binding</keyword>
<keyword id="KW-1185">Reference proteome</keyword>
<keyword id="KW-0862">Zinc</keyword>
<feature type="chain" id="PRO_1000186613" description="7-cyano-7-deazaguanine synthase">
    <location>
        <begin position="1"/>
        <end position="221"/>
    </location>
</feature>
<feature type="binding site" evidence="1">
    <location>
        <begin position="7"/>
        <end position="17"/>
    </location>
    <ligand>
        <name>ATP</name>
        <dbReference type="ChEBI" id="CHEBI:30616"/>
    </ligand>
</feature>
<feature type="binding site" evidence="1">
    <location>
        <position position="187"/>
    </location>
    <ligand>
        <name>Zn(2+)</name>
        <dbReference type="ChEBI" id="CHEBI:29105"/>
    </ligand>
</feature>
<feature type="binding site" evidence="1">
    <location>
        <position position="195"/>
    </location>
    <ligand>
        <name>Zn(2+)</name>
        <dbReference type="ChEBI" id="CHEBI:29105"/>
    </ligand>
</feature>
<feature type="binding site" evidence="1">
    <location>
        <position position="198"/>
    </location>
    <ligand>
        <name>Zn(2+)</name>
        <dbReference type="ChEBI" id="CHEBI:29105"/>
    </ligand>
</feature>
<feature type="binding site" evidence="1">
    <location>
        <position position="201"/>
    </location>
    <ligand>
        <name>Zn(2+)</name>
        <dbReference type="ChEBI" id="CHEBI:29105"/>
    </ligand>
</feature>
<proteinExistence type="inferred from homology"/>
<protein>
    <recommendedName>
        <fullName evidence="1">7-cyano-7-deazaguanine synthase</fullName>
        <ecNumber evidence="1">6.3.4.20</ecNumber>
    </recommendedName>
    <alternativeName>
        <fullName evidence="1">7-cyano-7-carbaguanine synthase</fullName>
    </alternativeName>
    <alternativeName>
        <fullName evidence="1">Archaeosine biosynthesis protein QueC</fullName>
    </alternativeName>
    <alternativeName>
        <fullName evidence="1">PreQ(0) synthase</fullName>
    </alternativeName>
</protein>